<sequence>VSSVISSSLFEKMLLHRGFYTYDAFIAAAKSFPAFATTGSTDVRKREVAAFLAQTSHETTGGWPTAPDGPYELGSTSDYFGRGPIQISYNYNYGAAGKAIGVDLLRNPDLVTSDNTVEFKTALWFWMTPQSPKPSSHDVITGRWSPSSTDKAAGRVPGYGVLTNIIDGGVECGKGQESHVADRIGYYKDNLDCYNQKPFA</sequence>
<reference key="1">
    <citation type="journal article" date="2010" name="Appl. Biochem. Biotechnol.">
        <title>Oat (Avena sativa) seed extract as an antifungal food preservative through the catalytic activity of a highly abundant class I chitinase.</title>
        <authorList>
            <person name="Sorensen H.P."/>
            <person name="Madsen L.S."/>
            <person name="Petersen J."/>
            <person name="Andersen J.T."/>
            <person name="Hansen A.M."/>
            <person name="Beck H.C."/>
        </authorList>
    </citation>
    <scope>PROTEIN SEQUENCE</scope>
    <scope>FUNCTION</scope>
    <scope>CATALYTIC ACTIVITY</scope>
    <source>
        <strain>cv. Adamo</strain>
        <tissue>Seed</tissue>
    </source>
</reference>
<feature type="chain" id="PRO_0000365620" description="Endochitinase">
    <location>
        <begin position="1" status="less than"/>
        <end position="200" status="greater than"/>
    </location>
</feature>
<feature type="active site" description="Proton donor" evidence="1">
    <location>
        <position position="58"/>
    </location>
</feature>
<feature type="disulfide bond" evidence="2">
    <location>
        <begin status="unknown"/>
        <end position="193"/>
    </location>
</feature>
<feature type="non-consecutive residues" evidence="5">
    <location>
        <begin position="17"/>
        <end position="18"/>
    </location>
</feature>
<feature type="non-consecutive residues" evidence="5">
    <location>
        <begin position="71"/>
        <end position="72"/>
    </location>
</feature>
<feature type="non-consecutive residues" evidence="5">
    <location>
        <begin position="79"/>
        <end position="80"/>
    </location>
</feature>
<feature type="non-consecutive residues" evidence="5">
    <location>
        <begin position="188"/>
        <end position="189"/>
    </location>
</feature>
<feature type="non-terminal residue">
    <location>
        <position position="1"/>
    </location>
</feature>
<feature type="non-terminal residue">
    <location>
        <position position="200"/>
    </location>
</feature>
<accession>P86181</accession>
<evidence type="ECO:0000250" key="1">
    <source>
        <dbReference type="UniProtKB" id="P29022"/>
    </source>
</evidence>
<evidence type="ECO:0000250" key="2">
    <source>
        <dbReference type="UniProtKB" id="Q9FRV1"/>
    </source>
</evidence>
<evidence type="ECO:0000255" key="3"/>
<evidence type="ECO:0000269" key="4">
    <source>
    </source>
</evidence>
<evidence type="ECO:0000305" key="5"/>
<comment type="function">
    <text evidence="4">This protein functions as a defense against chitin-containing fungal pathogens.</text>
</comment>
<comment type="catalytic activity">
    <reaction evidence="4">
        <text>Random endo-hydrolysis of N-acetyl-beta-D-glucosaminide (1-&gt;4)-beta-linkages in chitin and chitodextrins.</text>
        <dbReference type="EC" id="3.2.1.14"/>
    </reaction>
</comment>
<comment type="similarity">
    <text evidence="3">Belongs to the glycosyl hydrolase 19 family. Chitinase class I subfamily.</text>
</comment>
<proteinExistence type="evidence at protein level"/>
<dbReference type="EC" id="3.2.1.14"/>
<dbReference type="SMR" id="P86181"/>
<dbReference type="BRENDA" id="3.2.1.14">
    <property type="organism ID" value="588"/>
</dbReference>
<dbReference type="GO" id="GO:0008843">
    <property type="term" value="F:endochitinase activity"/>
    <property type="evidence" value="ECO:0007669"/>
    <property type="project" value="UniProtKB-EC"/>
</dbReference>
<dbReference type="GO" id="GO:0016998">
    <property type="term" value="P:cell wall macromolecule catabolic process"/>
    <property type="evidence" value="ECO:0007669"/>
    <property type="project" value="InterPro"/>
</dbReference>
<dbReference type="GO" id="GO:0006032">
    <property type="term" value="P:chitin catabolic process"/>
    <property type="evidence" value="ECO:0007669"/>
    <property type="project" value="UniProtKB-KW"/>
</dbReference>
<dbReference type="GO" id="GO:0050832">
    <property type="term" value="P:defense response to fungus"/>
    <property type="evidence" value="ECO:0007669"/>
    <property type="project" value="UniProtKB-KW"/>
</dbReference>
<dbReference type="GO" id="GO:0031640">
    <property type="term" value="P:killing of cells of another organism"/>
    <property type="evidence" value="ECO:0007669"/>
    <property type="project" value="UniProtKB-KW"/>
</dbReference>
<dbReference type="GO" id="GO:0000272">
    <property type="term" value="P:polysaccharide catabolic process"/>
    <property type="evidence" value="ECO:0007669"/>
    <property type="project" value="UniProtKB-KW"/>
</dbReference>
<dbReference type="CDD" id="cd00325">
    <property type="entry name" value="chitinase_GH19"/>
    <property type="match status" value="1"/>
</dbReference>
<dbReference type="Gene3D" id="1.10.530.10">
    <property type="match status" value="1"/>
</dbReference>
<dbReference type="InterPro" id="IPR016283">
    <property type="entry name" value="Glyco_hydro_19"/>
</dbReference>
<dbReference type="InterPro" id="IPR000726">
    <property type="entry name" value="Glyco_hydro_19_cat"/>
</dbReference>
<dbReference type="InterPro" id="IPR023346">
    <property type="entry name" value="Lysozyme-like_dom_sf"/>
</dbReference>
<dbReference type="PANTHER" id="PTHR22595:SF79">
    <property type="entry name" value="CHITINASE 12"/>
    <property type="match status" value="1"/>
</dbReference>
<dbReference type="PANTHER" id="PTHR22595">
    <property type="entry name" value="CHITINASE-RELATED"/>
    <property type="match status" value="1"/>
</dbReference>
<dbReference type="Pfam" id="PF00182">
    <property type="entry name" value="Glyco_hydro_19"/>
    <property type="match status" value="2"/>
</dbReference>
<dbReference type="PIRSF" id="PIRSF001060">
    <property type="entry name" value="Endochitinase"/>
    <property type="match status" value="1"/>
</dbReference>
<dbReference type="SUPFAM" id="SSF53955">
    <property type="entry name" value="Lysozyme-like"/>
    <property type="match status" value="1"/>
</dbReference>
<keyword id="KW-0929">Antimicrobial</keyword>
<keyword id="KW-0119">Carbohydrate metabolism</keyword>
<keyword id="KW-0146">Chitin degradation</keyword>
<keyword id="KW-0903">Direct protein sequencing</keyword>
<keyword id="KW-1015">Disulfide bond</keyword>
<keyword id="KW-0295">Fungicide</keyword>
<keyword id="KW-0326">Glycosidase</keyword>
<keyword id="KW-0378">Hydrolase</keyword>
<keyword id="KW-0611">Plant defense</keyword>
<keyword id="KW-0624">Polysaccharide degradation</keyword>
<organism>
    <name type="scientific">Avena sativa</name>
    <name type="common">Oat</name>
    <dbReference type="NCBI Taxonomy" id="4498"/>
    <lineage>
        <taxon>Eukaryota</taxon>
        <taxon>Viridiplantae</taxon>
        <taxon>Streptophyta</taxon>
        <taxon>Embryophyta</taxon>
        <taxon>Tracheophyta</taxon>
        <taxon>Spermatophyta</taxon>
        <taxon>Magnoliopsida</taxon>
        <taxon>Liliopsida</taxon>
        <taxon>Poales</taxon>
        <taxon>Poaceae</taxon>
        <taxon>BOP clade</taxon>
        <taxon>Pooideae</taxon>
        <taxon>Poodae</taxon>
        <taxon>Poeae</taxon>
        <taxon>Poeae Chloroplast Group 1 (Aveneae type)</taxon>
        <taxon>Aveninae</taxon>
        <taxon>Avena</taxon>
    </lineage>
</organism>
<name>CHIT_AVESA</name>
<protein>
    <recommendedName>
        <fullName>Endochitinase</fullName>
        <ecNumber>3.2.1.14</ecNumber>
    </recommendedName>
</protein>